<organism>
    <name type="scientific">Homo sapiens</name>
    <name type="common">Human</name>
    <dbReference type="NCBI Taxonomy" id="9606"/>
    <lineage>
        <taxon>Eukaryota</taxon>
        <taxon>Metazoa</taxon>
        <taxon>Chordata</taxon>
        <taxon>Craniata</taxon>
        <taxon>Vertebrata</taxon>
        <taxon>Euteleostomi</taxon>
        <taxon>Mammalia</taxon>
        <taxon>Eutheria</taxon>
        <taxon>Euarchontoglires</taxon>
        <taxon>Primates</taxon>
        <taxon>Haplorrhini</taxon>
        <taxon>Catarrhini</taxon>
        <taxon>Hominidae</taxon>
        <taxon>Homo</taxon>
    </lineage>
</organism>
<accession>Q9C0B9</accession>
<accession>B2RPG6</accession>
<accession>Q8N3S1</accession>
<accession>Q9NXF6</accession>
<reference key="1">
    <citation type="journal article" date="2005" name="Nature">
        <title>DNA sequence and analysis of human chromosome 18.</title>
        <authorList>
            <person name="Nusbaum C."/>
            <person name="Zody M.C."/>
            <person name="Borowsky M.L."/>
            <person name="Kamal M."/>
            <person name="Kodira C.D."/>
            <person name="Taylor T.D."/>
            <person name="Whittaker C.A."/>
            <person name="Chang J.L."/>
            <person name="Cuomo C.A."/>
            <person name="Dewar K."/>
            <person name="FitzGerald M.G."/>
            <person name="Yang X."/>
            <person name="Abouelleil A."/>
            <person name="Allen N.R."/>
            <person name="Anderson S."/>
            <person name="Bloom T."/>
            <person name="Bugalter B."/>
            <person name="Butler J."/>
            <person name="Cook A."/>
            <person name="DeCaprio D."/>
            <person name="Engels R."/>
            <person name="Garber M."/>
            <person name="Gnirke A."/>
            <person name="Hafez N."/>
            <person name="Hall J.L."/>
            <person name="Norman C.H."/>
            <person name="Itoh T."/>
            <person name="Jaffe D.B."/>
            <person name="Kuroki Y."/>
            <person name="Lehoczky J."/>
            <person name="Lui A."/>
            <person name="Macdonald P."/>
            <person name="Mauceli E."/>
            <person name="Mikkelsen T.S."/>
            <person name="Naylor J.W."/>
            <person name="Nicol R."/>
            <person name="Nguyen C."/>
            <person name="Noguchi H."/>
            <person name="O'Leary S.B."/>
            <person name="Piqani B."/>
            <person name="Smith C.L."/>
            <person name="Talamas J.A."/>
            <person name="Topham K."/>
            <person name="Totoki Y."/>
            <person name="Toyoda A."/>
            <person name="Wain H.M."/>
            <person name="Young S.K."/>
            <person name="Zeng Q."/>
            <person name="Zimmer A.R."/>
            <person name="Fujiyama A."/>
            <person name="Hattori M."/>
            <person name="Birren B.W."/>
            <person name="Sakaki Y."/>
            <person name="Lander E.S."/>
        </authorList>
    </citation>
    <scope>NUCLEOTIDE SEQUENCE [LARGE SCALE GENOMIC DNA]</scope>
</reference>
<reference key="2">
    <citation type="journal article" date="2004" name="Genome Res.">
        <title>The status, quality, and expansion of the NIH full-length cDNA project: the Mammalian Gene Collection (MGC).</title>
        <authorList>
            <consortium name="The MGC Project Team"/>
        </authorList>
    </citation>
    <scope>NUCLEOTIDE SEQUENCE [LARGE SCALE MRNA] (ISOFORM 2)</scope>
    <source>
        <tissue>Brain</tissue>
    </source>
</reference>
<reference key="3">
    <citation type="journal article" date="2007" name="BMC Genomics">
        <title>The full-ORF clone resource of the German cDNA consortium.</title>
        <authorList>
            <person name="Bechtel S."/>
            <person name="Rosenfelder H."/>
            <person name="Duda A."/>
            <person name="Schmidt C.P."/>
            <person name="Ernst U."/>
            <person name="Wellenreuther R."/>
            <person name="Mehrle A."/>
            <person name="Schuster C."/>
            <person name="Bahr A."/>
            <person name="Bloecker H."/>
            <person name="Heubner D."/>
            <person name="Hoerlein A."/>
            <person name="Michel G."/>
            <person name="Wedler H."/>
            <person name="Koehrer K."/>
            <person name="Ottenwaelder B."/>
            <person name="Poustka A."/>
            <person name="Wiemann S."/>
            <person name="Schupp I."/>
        </authorList>
    </citation>
    <scope>NUCLEOTIDE SEQUENCE [LARGE SCALE MRNA] OF 280-1178 (ISOFORM 1)</scope>
    <source>
        <tissue>Skeletal muscle</tissue>
    </source>
</reference>
<reference key="4">
    <citation type="journal article" date="2000" name="DNA Res.">
        <title>Prediction of the coding sequences of unidentified human genes. XIX. The complete sequences of 100 new cDNA clones from brain which code for large proteins in vitro.</title>
        <authorList>
            <person name="Nagase T."/>
            <person name="Kikuno R."/>
            <person name="Hattori A."/>
            <person name="Kondo Y."/>
            <person name="Okumura K."/>
            <person name="Ohara O."/>
        </authorList>
    </citation>
    <scope>NUCLEOTIDE SEQUENCE [LARGE SCALE MRNA] OF 324-1178 (ISOFORM 1/2)</scope>
    <source>
        <tissue>Brain</tissue>
    </source>
</reference>
<reference key="5">
    <citation type="journal article" date="2004" name="Nat. Genet.">
        <title>Complete sequencing and characterization of 21,243 full-length human cDNAs.</title>
        <authorList>
            <person name="Ota T."/>
            <person name="Suzuki Y."/>
            <person name="Nishikawa T."/>
            <person name="Otsuki T."/>
            <person name="Sugiyama T."/>
            <person name="Irie R."/>
            <person name="Wakamatsu A."/>
            <person name="Hayashi K."/>
            <person name="Sato H."/>
            <person name="Nagai K."/>
            <person name="Kimura K."/>
            <person name="Makita H."/>
            <person name="Sekine M."/>
            <person name="Obayashi M."/>
            <person name="Nishi T."/>
            <person name="Shibahara T."/>
            <person name="Tanaka T."/>
            <person name="Ishii S."/>
            <person name="Yamamoto J."/>
            <person name="Saito K."/>
            <person name="Kawai Y."/>
            <person name="Isono Y."/>
            <person name="Nakamura Y."/>
            <person name="Nagahari K."/>
            <person name="Murakami K."/>
            <person name="Yasuda T."/>
            <person name="Iwayanagi T."/>
            <person name="Wagatsuma M."/>
            <person name="Shiratori A."/>
            <person name="Sudo H."/>
            <person name="Hosoiri T."/>
            <person name="Kaku Y."/>
            <person name="Kodaira H."/>
            <person name="Kondo H."/>
            <person name="Sugawara M."/>
            <person name="Takahashi M."/>
            <person name="Kanda K."/>
            <person name="Yokoi T."/>
            <person name="Furuya T."/>
            <person name="Kikkawa E."/>
            <person name="Omura Y."/>
            <person name="Abe K."/>
            <person name="Kamihara K."/>
            <person name="Katsuta N."/>
            <person name="Sato K."/>
            <person name="Tanikawa M."/>
            <person name="Yamazaki M."/>
            <person name="Ninomiya K."/>
            <person name="Ishibashi T."/>
            <person name="Yamashita H."/>
            <person name="Murakawa K."/>
            <person name="Fujimori K."/>
            <person name="Tanai H."/>
            <person name="Kimata M."/>
            <person name="Watanabe M."/>
            <person name="Hiraoka S."/>
            <person name="Chiba Y."/>
            <person name="Ishida S."/>
            <person name="Ono Y."/>
            <person name="Takiguchi S."/>
            <person name="Watanabe S."/>
            <person name="Yosida M."/>
            <person name="Hotuta T."/>
            <person name="Kusano J."/>
            <person name="Kanehori K."/>
            <person name="Takahashi-Fujii A."/>
            <person name="Hara H."/>
            <person name="Tanase T.-O."/>
            <person name="Nomura Y."/>
            <person name="Togiya S."/>
            <person name="Komai F."/>
            <person name="Hara R."/>
            <person name="Takeuchi K."/>
            <person name="Arita M."/>
            <person name="Imose N."/>
            <person name="Musashino K."/>
            <person name="Yuuki H."/>
            <person name="Oshima A."/>
            <person name="Sasaki N."/>
            <person name="Aotsuka S."/>
            <person name="Yoshikawa Y."/>
            <person name="Matsunawa H."/>
            <person name="Ichihara T."/>
            <person name="Shiohata N."/>
            <person name="Sano S."/>
            <person name="Moriya S."/>
            <person name="Momiyama H."/>
            <person name="Satoh N."/>
            <person name="Takami S."/>
            <person name="Terashima Y."/>
            <person name="Suzuki O."/>
            <person name="Nakagawa S."/>
            <person name="Senoh A."/>
            <person name="Mizoguchi H."/>
            <person name="Goto Y."/>
            <person name="Shimizu F."/>
            <person name="Wakebe H."/>
            <person name="Hishigaki H."/>
            <person name="Watanabe T."/>
            <person name="Sugiyama A."/>
            <person name="Takemoto M."/>
            <person name="Kawakami B."/>
            <person name="Yamazaki M."/>
            <person name="Watanabe K."/>
            <person name="Kumagai A."/>
            <person name="Itakura S."/>
            <person name="Fukuzumi Y."/>
            <person name="Fujimori Y."/>
            <person name="Komiyama M."/>
            <person name="Tashiro H."/>
            <person name="Tanigami A."/>
            <person name="Fujiwara T."/>
            <person name="Ono T."/>
            <person name="Yamada K."/>
            <person name="Fujii Y."/>
            <person name="Ozaki K."/>
            <person name="Hirao M."/>
            <person name="Ohmori Y."/>
            <person name="Kawabata A."/>
            <person name="Hikiji T."/>
            <person name="Kobatake N."/>
            <person name="Inagaki H."/>
            <person name="Ikema Y."/>
            <person name="Okamoto S."/>
            <person name="Okitani R."/>
            <person name="Kawakami T."/>
            <person name="Noguchi S."/>
            <person name="Itoh T."/>
            <person name="Shigeta K."/>
            <person name="Senba T."/>
            <person name="Matsumura K."/>
            <person name="Nakajima Y."/>
            <person name="Mizuno T."/>
            <person name="Morinaga M."/>
            <person name="Sasaki M."/>
            <person name="Togashi T."/>
            <person name="Oyama M."/>
            <person name="Hata H."/>
            <person name="Watanabe M."/>
            <person name="Komatsu T."/>
            <person name="Mizushima-Sugano J."/>
            <person name="Satoh T."/>
            <person name="Shirai Y."/>
            <person name="Takahashi Y."/>
            <person name="Nakagawa K."/>
            <person name="Okumura K."/>
            <person name="Nagase T."/>
            <person name="Nomura N."/>
            <person name="Kikuchi H."/>
            <person name="Masuho Y."/>
            <person name="Yamashita R."/>
            <person name="Nakai K."/>
            <person name="Yada T."/>
            <person name="Nakamura Y."/>
            <person name="Ohara O."/>
            <person name="Isogai T."/>
            <person name="Sugano S."/>
        </authorList>
    </citation>
    <scope>NUCLEOTIDE SEQUENCE [LARGE SCALE MRNA] OF 782-1178 (ISOFORM 1/2)</scope>
</reference>
<reference key="6">
    <citation type="journal article" date="2011" name="Sci. Signal.">
        <title>System-wide temporal characterization of the proteome and phosphoproteome of human embryonic stem cell differentiation.</title>
        <authorList>
            <person name="Rigbolt K.T."/>
            <person name="Prokhorova T.A."/>
            <person name="Akimov V."/>
            <person name="Henningsen J."/>
            <person name="Johansen P.T."/>
            <person name="Kratchmarova I."/>
            <person name="Kassem M."/>
            <person name="Mann M."/>
            <person name="Olsen J.V."/>
            <person name="Blagoev B."/>
        </authorList>
    </citation>
    <scope>PHOSPHORYLATION [LARGE SCALE ANALYSIS] AT SER-236</scope>
    <scope>IDENTIFICATION BY MASS SPECTROMETRY [LARGE SCALE ANALYSIS]</scope>
</reference>
<sequence>MLRMKLPLKPTHPAEPPPEAEEPEADARPGAKAPSRRRRDCRPPPPPPPPAGPSRGPLPPPPPPRGLGPPVAGGAAAGAGMPGGGGGPSAALREQERVYEWFGLVLGSAQRLEFMCGLLDLCNPLELRFLGSCLEDLARKDYHYLRDSEAKANGLSDPGPLADFREPAVRSRLIVYLALLGSENREAAGRLHRLLPQVDSVLKSLRAARGEGSRGGAEDERGEDGDGEQDAEKDGSGPEGGIVEPRVGGGLGSRAQEELLLLFTMASLHPAFSFHQRVTLREHLERLRAALRGGPEDAEVEVEPCKFAGPRAQNNSAHGDYMQNNESSLIEQAPIPQDGLTVAPHRAQREAVHIEKIMLKGVQRKRADKYWEYTFKVNWSDLSVTTVTKTHQELQEFLLKLPKELSSETFDKTILRALNQGSLKREERRHPDLEPILRQLFSSSSQAFLQSQKVHSFFQSISSDSLHSINNLQSSLKTSKILEHLKEDSSEASSQEEDVLQHAIIHKKHTGKSPIVNNIGTSCSPLDGLTMQYSEQNGIVDWRKQSCTTIQHPEHCVTSADQHSAEKRSLSSINKKKGKPQTEKEKIKKTDNRLNSRINGIRLSTPQHAHGGTVKDVNLDIGSGHDTCGETSSESYSSPSSPRHDGRESFESEEEKDRDTDSNSEDSGNPSTTRFTGYGSVNQTVTVKPPVQIASLGNENGNLLEDPLNSPKYQHISFMPTLHCVMHNGAQKSEVVVPAPKPADGKTIGMLVPSPVAISAIRESANSTPVGILGPTACTGESEKHLELLASPLPIPSTFLPHSSTPALHLTVQRLKLPPPQGSSESCTVNIPQQPPGSLSIASPNTAFIPIHNPGSFPGSPVATTDPITKSASQVVGLNQMVPQIEGNTGTVPQPTNVKVVLPAAGLSAAQPPASYPLPGSPLAAGVLPSQNSSVLSTAATSPQPASAGISQAQATVPPAVPTHTPGPAPSPSPALTHSTAQSDSTSYISAVGNTNANGTVVPPQQMGSGPCGSCGRRCSCGTNGNLQLNSYYYPNPMPGPMYRVPSFFTLPSICNGSYLNQAHQSNGNQLPFFLPQTPYANGLVHDPVMGSQANYGMQQMAGFGRFYPVYPAPNVVANTSGSGPKKNGNVSCYNCGVSGHYAQDCKQSSMEANQQGTYRLRYAPPLPPSNDTLDSAD</sequence>
<gene>
    <name evidence="5" type="primary">ZCCHC2</name>
    <name evidence="5" type="synonym">C18orf49</name>
    <name type="synonym">KIAA1744</name>
</gene>
<keyword id="KW-0025">Alternative splicing</keyword>
<keyword id="KW-0479">Metal-binding</keyword>
<keyword id="KW-0597">Phosphoprotein</keyword>
<keyword id="KW-1267">Proteomics identification</keyword>
<keyword id="KW-1185">Reference proteome</keyword>
<keyword id="KW-0862">Zinc</keyword>
<keyword id="KW-0863">Zinc-finger</keyword>
<comment type="alternative products">
    <event type="alternative splicing"/>
    <isoform>
        <id>Q9C0B9-1</id>
        <name>1</name>
        <sequence type="displayed"/>
    </isoform>
    <isoform>
        <id>Q9C0B9-2</id>
        <name>2</name>
        <sequence type="described" ref="VSP_055995"/>
    </isoform>
</comment>
<comment type="sequence caution" evidence="4">
    <conflict type="erroneous initiation">
        <sequence resource="EMBL-CDS" id="BAA91057"/>
    </conflict>
</comment>
<protein>
    <recommendedName>
        <fullName>Zinc finger CCHC domain-containing protein 2</fullName>
    </recommendedName>
</protein>
<proteinExistence type="evidence at protein level"/>
<feature type="chain" id="PRO_0000150949" description="Zinc finger CCHC domain-containing protein 2">
    <location>
        <begin position="1"/>
        <end position="1178"/>
    </location>
</feature>
<feature type="zinc finger region" description="CCHC-type" evidence="1">
    <location>
        <begin position="1131"/>
        <end position="1148"/>
    </location>
</feature>
<feature type="region of interest" description="Disordered" evidence="2">
    <location>
        <begin position="1"/>
        <end position="90"/>
    </location>
</feature>
<feature type="region of interest" description="Disordered" evidence="2">
    <location>
        <begin position="207"/>
        <end position="249"/>
    </location>
</feature>
<feature type="region of interest" description="Disordered" evidence="2">
    <location>
        <begin position="557"/>
        <end position="683"/>
    </location>
</feature>
<feature type="region of interest" description="Disordered" evidence="2">
    <location>
        <begin position="936"/>
        <end position="986"/>
    </location>
</feature>
<feature type="compositionally biased region" description="Pro residues" evidence="2">
    <location>
        <begin position="43"/>
        <end position="67"/>
    </location>
</feature>
<feature type="compositionally biased region" description="Gly residues" evidence="2">
    <location>
        <begin position="75"/>
        <end position="88"/>
    </location>
</feature>
<feature type="compositionally biased region" description="Basic and acidic residues" evidence="2">
    <location>
        <begin position="208"/>
        <end position="219"/>
    </location>
</feature>
<feature type="compositionally biased region" description="Acidic residues" evidence="2">
    <location>
        <begin position="220"/>
        <end position="229"/>
    </location>
</feature>
<feature type="compositionally biased region" description="Basic and acidic residues" evidence="2">
    <location>
        <begin position="580"/>
        <end position="594"/>
    </location>
</feature>
<feature type="compositionally biased region" description="Polar residues" evidence="2">
    <location>
        <begin position="595"/>
        <end position="607"/>
    </location>
</feature>
<feature type="compositionally biased region" description="Low complexity" evidence="2">
    <location>
        <begin position="632"/>
        <end position="641"/>
    </location>
</feature>
<feature type="compositionally biased region" description="Basic and acidic residues" evidence="2">
    <location>
        <begin position="642"/>
        <end position="661"/>
    </location>
</feature>
<feature type="compositionally biased region" description="Polar residues" evidence="2">
    <location>
        <begin position="665"/>
        <end position="683"/>
    </location>
</feature>
<feature type="compositionally biased region" description="Low complexity" evidence="2">
    <location>
        <begin position="937"/>
        <end position="948"/>
    </location>
</feature>
<feature type="compositionally biased region" description="Pro residues" evidence="2">
    <location>
        <begin position="959"/>
        <end position="973"/>
    </location>
</feature>
<feature type="compositionally biased region" description="Polar residues" evidence="2">
    <location>
        <begin position="974"/>
        <end position="986"/>
    </location>
</feature>
<feature type="modified residue" description="Phosphoserine" evidence="6">
    <location>
        <position position="236"/>
    </location>
</feature>
<feature type="splice variant" id="VSP_055995" description="In isoform 2." evidence="3">
    <location>
        <begin position="1"/>
        <end position="321"/>
    </location>
</feature>
<feature type="sequence variant" id="VAR_060121" description="In dbSNP:rs35643152.">
    <original>T</original>
    <variation>A</variation>
    <location>
        <position position="941"/>
    </location>
</feature>
<feature type="sequence conflict" description="In Ref. 3; CAD38618." evidence="4" ref="3">
    <original>K</original>
    <variation>R</variation>
    <location>
        <position position="508"/>
    </location>
</feature>
<feature type="sequence conflict" description="In Ref. 3; CAD38618." evidence="4" ref="3">
    <original>H</original>
    <variation>Y</variation>
    <location>
        <position position="802"/>
    </location>
</feature>
<dbReference type="EMBL" id="AC064801">
    <property type="status" value="NOT_ANNOTATED_CDS"/>
    <property type="molecule type" value="Genomic_DNA"/>
</dbReference>
<dbReference type="EMBL" id="BC137435">
    <property type="protein sequence ID" value="AAI37436.1"/>
    <property type="molecule type" value="mRNA"/>
</dbReference>
<dbReference type="EMBL" id="AL832323">
    <property type="protein sequence ID" value="CAD38618.1"/>
    <property type="molecule type" value="mRNA"/>
</dbReference>
<dbReference type="EMBL" id="AB051531">
    <property type="protein sequence ID" value="BAB21835.1"/>
    <property type="molecule type" value="mRNA"/>
</dbReference>
<dbReference type="EMBL" id="AK000288">
    <property type="protein sequence ID" value="BAA91057.1"/>
    <property type="status" value="ALT_INIT"/>
    <property type="molecule type" value="mRNA"/>
</dbReference>
<dbReference type="CCDS" id="CCDS45880.1">
    <molecule id="Q9C0B9-1"/>
</dbReference>
<dbReference type="RefSeq" id="NP_060212.4">
    <molecule id="Q9C0B9-1"/>
    <property type="nucleotide sequence ID" value="NM_017742.5"/>
</dbReference>
<dbReference type="SMR" id="Q9C0B9"/>
<dbReference type="BioGRID" id="120225">
    <property type="interactions" value="26"/>
</dbReference>
<dbReference type="FunCoup" id="Q9C0B9">
    <property type="interactions" value="899"/>
</dbReference>
<dbReference type="IntAct" id="Q9C0B9">
    <property type="interactions" value="7"/>
</dbReference>
<dbReference type="MINT" id="Q9C0B9"/>
<dbReference type="STRING" id="9606.ENSP00000269499"/>
<dbReference type="GlyCosmos" id="Q9C0B9">
    <property type="glycosylation" value="1 site, 1 glycan"/>
</dbReference>
<dbReference type="GlyGen" id="Q9C0B9">
    <property type="glycosylation" value="3 sites, 1 O-linked glycan (2 sites)"/>
</dbReference>
<dbReference type="iPTMnet" id="Q9C0B9"/>
<dbReference type="PhosphoSitePlus" id="Q9C0B9"/>
<dbReference type="BioMuta" id="ZCCHC2"/>
<dbReference type="DMDM" id="182676458"/>
<dbReference type="jPOST" id="Q9C0B9"/>
<dbReference type="MassIVE" id="Q9C0B9"/>
<dbReference type="PaxDb" id="9606-ENSP00000269499"/>
<dbReference type="PeptideAtlas" id="Q9C0B9"/>
<dbReference type="ProteomicsDB" id="79994">
    <molecule id="Q9C0B9-1"/>
</dbReference>
<dbReference type="Pumba" id="Q9C0B9"/>
<dbReference type="Antibodypedia" id="23063">
    <property type="antibodies" value="18 antibodies from 8 providers"/>
</dbReference>
<dbReference type="DNASU" id="54877"/>
<dbReference type="Ensembl" id="ENST00000269499.10">
    <molecule id="Q9C0B9-1"/>
    <property type="protein sequence ID" value="ENSP00000269499.4"/>
    <property type="gene ID" value="ENSG00000141664.10"/>
</dbReference>
<dbReference type="Ensembl" id="ENST00000586834.1">
    <molecule id="Q9C0B9-2"/>
    <property type="protein sequence ID" value="ENSP00000464791.1"/>
    <property type="gene ID" value="ENSG00000141664.10"/>
</dbReference>
<dbReference type="GeneID" id="54877"/>
<dbReference type="KEGG" id="hsa:54877"/>
<dbReference type="MANE-Select" id="ENST00000269499.10">
    <property type="protein sequence ID" value="ENSP00000269499.4"/>
    <property type="RefSeq nucleotide sequence ID" value="NM_017742.6"/>
    <property type="RefSeq protein sequence ID" value="NP_060212.4"/>
</dbReference>
<dbReference type="UCSC" id="uc002lip.5">
    <molecule id="Q9C0B9-1"/>
    <property type="organism name" value="human"/>
</dbReference>
<dbReference type="AGR" id="HGNC:22916"/>
<dbReference type="CTD" id="54877"/>
<dbReference type="DisGeNET" id="54877"/>
<dbReference type="GeneCards" id="ZCCHC2"/>
<dbReference type="HGNC" id="HGNC:22916">
    <property type="gene designation" value="ZCCHC2"/>
</dbReference>
<dbReference type="HPA" id="ENSG00000141664">
    <property type="expression patterns" value="Low tissue specificity"/>
</dbReference>
<dbReference type="MIM" id="620095">
    <property type="type" value="gene"/>
</dbReference>
<dbReference type="neXtProt" id="NX_Q9C0B9"/>
<dbReference type="OpenTargets" id="ENSG00000141664"/>
<dbReference type="PharmGKB" id="PA134861180"/>
<dbReference type="VEuPathDB" id="HostDB:ENSG00000141664"/>
<dbReference type="eggNOG" id="KOG3791">
    <property type="taxonomic scope" value="Eukaryota"/>
</dbReference>
<dbReference type="eggNOG" id="KOG4400">
    <property type="taxonomic scope" value="Eukaryota"/>
</dbReference>
<dbReference type="GeneTree" id="ENSGT00520000055637"/>
<dbReference type="HOGENOM" id="CLU_012453_0_0_1"/>
<dbReference type="InParanoid" id="Q9C0B9"/>
<dbReference type="OMA" id="RIDKEYN"/>
<dbReference type="OrthoDB" id="6361509at2759"/>
<dbReference type="PAN-GO" id="Q9C0B9">
    <property type="GO annotations" value="0 GO annotations based on evolutionary models"/>
</dbReference>
<dbReference type="PhylomeDB" id="Q9C0B9"/>
<dbReference type="TreeFam" id="TF335574"/>
<dbReference type="PathwayCommons" id="Q9C0B9"/>
<dbReference type="SignaLink" id="Q9C0B9"/>
<dbReference type="BioGRID-ORCS" id="54877">
    <property type="hits" value="9 hits in 1167 CRISPR screens"/>
</dbReference>
<dbReference type="CD-CODE" id="232F8A39">
    <property type="entry name" value="P-body"/>
</dbReference>
<dbReference type="CD-CODE" id="DEE660B4">
    <property type="entry name" value="Stress granule"/>
</dbReference>
<dbReference type="ChiTaRS" id="ZCCHC2">
    <property type="organism name" value="human"/>
</dbReference>
<dbReference type="GeneWiki" id="ZCCHC2"/>
<dbReference type="GenomeRNAi" id="54877"/>
<dbReference type="Pharos" id="Q9C0B9">
    <property type="development level" value="Tdark"/>
</dbReference>
<dbReference type="PRO" id="PR:Q9C0B9"/>
<dbReference type="Proteomes" id="UP000005640">
    <property type="component" value="Chromosome 18"/>
</dbReference>
<dbReference type="RNAct" id="Q9C0B9">
    <property type="molecule type" value="protein"/>
</dbReference>
<dbReference type="Bgee" id="ENSG00000141664">
    <property type="expression patterns" value="Expressed in secondary oocyte and 196 other cell types or tissues"/>
</dbReference>
<dbReference type="ExpressionAtlas" id="Q9C0B9">
    <property type="expression patterns" value="baseline and differential"/>
</dbReference>
<dbReference type="GO" id="GO:0005737">
    <property type="term" value="C:cytoplasm"/>
    <property type="evidence" value="ECO:0000314"/>
    <property type="project" value="LIFEdb"/>
</dbReference>
<dbReference type="GO" id="GO:0003676">
    <property type="term" value="F:nucleic acid binding"/>
    <property type="evidence" value="ECO:0007669"/>
    <property type="project" value="InterPro"/>
</dbReference>
<dbReference type="GO" id="GO:0035091">
    <property type="term" value="F:phosphatidylinositol binding"/>
    <property type="evidence" value="ECO:0007669"/>
    <property type="project" value="InterPro"/>
</dbReference>
<dbReference type="GO" id="GO:0008270">
    <property type="term" value="F:zinc ion binding"/>
    <property type="evidence" value="ECO:0007669"/>
    <property type="project" value="UniProtKB-KW"/>
</dbReference>
<dbReference type="FunFam" id="3.30.1520.10:FF:000045">
    <property type="entry name" value="Zinc finger CCHC domain-containing protein 2"/>
    <property type="match status" value="1"/>
</dbReference>
<dbReference type="FunFam" id="4.10.60.10:FF:000019">
    <property type="entry name" value="Zinc finger CCHC domain-containing protein 2"/>
    <property type="match status" value="1"/>
</dbReference>
<dbReference type="Gene3D" id="3.30.1520.10">
    <property type="entry name" value="Phox-like domain"/>
    <property type="match status" value="1"/>
</dbReference>
<dbReference type="Gene3D" id="4.10.60.10">
    <property type="entry name" value="Zinc finger, CCHC-type"/>
    <property type="match status" value="1"/>
</dbReference>
<dbReference type="InterPro" id="IPR036871">
    <property type="entry name" value="PX_dom_sf"/>
</dbReference>
<dbReference type="InterPro" id="IPR042793">
    <property type="entry name" value="ZCCHC2"/>
</dbReference>
<dbReference type="InterPro" id="IPR001878">
    <property type="entry name" value="Znf_CCHC"/>
</dbReference>
<dbReference type="InterPro" id="IPR036875">
    <property type="entry name" value="Znf_CCHC_sf"/>
</dbReference>
<dbReference type="PANTHER" id="PTHR46939">
    <property type="entry name" value="ZINC FINGER CCHC DOMAIN-CONTAINING PROTEIN 2"/>
    <property type="match status" value="1"/>
</dbReference>
<dbReference type="PANTHER" id="PTHR46939:SF1">
    <property type="entry name" value="ZINC FINGER CCHC DOMAIN-CONTAINING PROTEIN 2"/>
    <property type="match status" value="1"/>
</dbReference>
<dbReference type="Pfam" id="PF25479">
    <property type="entry name" value="Vts1"/>
    <property type="match status" value="1"/>
</dbReference>
<dbReference type="Pfam" id="PF00098">
    <property type="entry name" value="zf-CCHC"/>
    <property type="match status" value="1"/>
</dbReference>
<dbReference type="SMART" id="SM00343">
    <property type="entry name" value="ZnF_C2HC"/>
    <property type="match status" value="1"/>
</dbReference>
<dbReference type="SUPFAM" id="SSF64268">
    <property type="entry name" value="PX domain"/>
    <property type="match status" value="1"/>
</dbReference>
<dbReference type="SUPFAM" id="SSF57756">
    <property type="entry name" value="Retrovirus zinc finger-like domains"/>
    <property type="match status" value="1"/>
</dbReference>
<dbReference type="PROSITE" id="PS50158">
    <property type="entry name" value="ZF_CCHC"/>
    <property type="match status" value="1"/>
</dbReference>
<evidence type="ECO:0000255" key="1">
    <source>
        <dbReference type="PROSITE-ProRule" id="PRU00047"/>
    </source>
</evidence>
<evidence type="ECO:0000256" key="2">
    <source>
        <dbReference type="SAM" id="MobiDB-lite"/>
    </source>
</evidence>
<evidence type="ECO:0000303" key="3">
    <source>
    </source>
</evidence>
<evidence type="ECO:0000305" key="4"/>
<evidence type="ECO:0000312" key="5">
    <source>
        <dbReference type="HGNC" id="HGNC:22916"/>
    </source>
</evidence>
<evidence type="ECO:0007744" key="6">
    <source>
    </source>
</evidence>
<name>ZCHC2_HUMAN</name>